<gene>
    <name type="primary">A9</name>
</gene>
<sequence>MEFLKSFTTILFVMFLAMSALETVPMVRAQQCLDNLSNMQVCAPLVLPGAVNPAPNSNCCIALQATNKDCICNALRAATTFTTTCNLPSLDCGITI</sequence>
<organism>
    <name type="scientific">Brassica napus</name>
    <name type="common">Rape</name>
    <dbReference type="NCBI Taxonomy" id="3708"/>
    <lineage>
        <taxon>Eukaryota</taxon>
        <taxon>Viridiplantae</taxon>
        <taxon>Streptophyta</taxon>
        <taxon>Embryophyta</taxon>
        <taxon>Tracheophyta</taxon>
        <taxon>Spermatophyta</taxon>
        <taxon>Magnoliopsida</taxon>
        <taxon>eudicotyledons</taxon>
        <taxon>Gunneridae</taxon>
        <taxon>Pentapetalae</taxon>
        <taxon>rosids</taxon>
        <taxon>malvids</taxon>
        <taxon>Brassicales</taxon>
        <taxon>Brassicaceae</taxon>
        <taxon>Brassiceae</taxon>
        <taxon>Brassica</taxon>
    </lineage>
</organism>
<keyword id="KW-1015">Disulfide bond</keyword>
<keyword id="KW-0964">Secreted</keyword>
<keyword id="KW-0732">Signal</keyword>
<reference key="1">
    <citation type="journal article" date="1992" name="Plant Mol. Biol.">
        <title>The isolation and characterisation of the tapetum-specific Arabidopsis thaliana A9 gene.</title>
        <authorList>
            <person name="Paul W."/>
            <person name="Hodge R."/>
            <person name="Smartt S."/>
            <person name="Draper J."/>
            <person name="Scott R."/>
        </authorList>
    </citation>
    <scope>NUCLEOTIDE SEQUENCE [MRNA]</scope>
    <scope>TISSUE SPECIFICITY</scope>
    <scope>DEVELOPMENTAL STAGE</scope>
    <source>
        <tissue>Anther</tissue>
    </source>
</reference>
<dbReference type="EMBL" id="X61751">
    <property type="protein sequence ID" value="CAA43890.1"/>
    <property type="molecule type" value="mRNA"/>
</dbReference>
<dbReference type="EMBL" id="X61752">
    <property type="protein sequence ID" value="CAA43891.1"/>
    <property type="molecule type" value="mRNA"/>
</dbReference>
<dbReference type="PIR" id="S22467">
    <property type="entry name" value="S22467"/>
</dbReference>
<dbReference type="SMR" id="Q05772"/>
<dbReference type="EnsemblPlants" id="CDX70018">
    <property type="protein sequence ID" value="CDX70018"/>
    <property type="gene ID" value="GSBRNA2T00136114001"/>
</dbReference>
<dbReference type="Gramene" id="CDX70018">
    <property type="protein sequence ID" value="CDX70018"/>
    <property type="gene ID" value="GSBRNA2T00136114001"/>
</dbReference>
<dbReference type="OMA" id="ECACSTM"/>
<dbReference type="OrthoDB" id="1873458at2759"/>
<dbReference type="GO" id="GO:0005576">
    <property type="term" value="C:extracellular region"/>
    <property type="evidence" value="ECO:0007669"/>
    <property type="project" value="UniProtKB-SubCell"/>
</dbReference>
<dbReference type="InterPro" id="IPR036312">
    <property type="entry name" value="Bifun_inhib/LTP/seed_sf"/>
</dbReference>
<dbReference type="InterPro" id="IPR016140">
    <property type="entry name" value="Bifunc_inhib/LTP/seed_store"/>
</dbReference>
<dbReference type="PANTHER" id="PTHR35501:SF5">
    <property type="entry name" value="BIFUNCTIONAL INHIBITOR_LIPID-TRANSFER PROTEIN_SEED STORAGE 2S ALBUMIN SUPERFAMILY PROTEIN-RELATED"/>
    <property type="match status" value="1"/>
</dbReference>
<dbReference type="PANTHER" id="PTHR35501">
    <property type="entry name" value="PROTEIN YY1"/>
    <property type="match status" value="1"/>
</dbReference>
<dbReference type="Pfam" id="PF00234">
    <property type="entry name" value="Tryp_alpha_amyl"/>
    <property type="match status" value="1"/>
</dbReference>
<dbReference type="SMART" id="SM00499">
    <property type="entry name" value="AAI"/>
    <property type="match status" value="1"/>
</dbReference>
<dbReference type="SUPFAM" id="SSF47699">
    <property type="entry name" value="Bifunctional inhibitor/lipid-transfer protein/seed storage 2S albumin"/>
    <property type="match status" value="1"/>
</dbReference>
<evidence type="ECO:0000250" key="1"/>
<evidence type="ECO:0000255" key="2"/>
<evidence type="ECO:0000269" key="3">
    <source>
    </source>
</evidence>
<evidence type="ECO:0000305" key="4"/>
<protein>
    <recommendedName>
        <fullName>Tapetum-specific protein A9</fullName>
    </recommendedName>
</protein>
<feature type="signal peptide" evidence="2">
    <location>
        <begin position="1"/>
        <end position="29"/>
    </location>
</feature>
<feature type="chain" id="PRO_0000000233" description="Tapetum-specific protein A9">
    <location>
        <begin position="30"/>
        <end position="96"/>
    </location>
</feature>
<feature type="disulfide bond" evidence="1">
    <location>
        <begin position="32"/>
        <end position="70"/>
    </location>
</feature>
<feature type="disulfide bond" evidence="1">
    <location>
        <begin position="42"/>
        <end position="59"/>
    </location>
</feature>
<feature type="disulfide bond" evidence="1">
    <location>
        <begin position="60"/>
        <end position="85"/>
    </location>
</feature>
<feature type="disulfide bond" evidence="1">
    <location>
        <begin position="72"/>
        <end position="92"/>
    </location>
</feature>
<name>A9_BRANA</name>
<comment type="subcellular location">
    <subcellularLocation>
        <location evidence="4">Secreted</location>
    </subcellularLocation>
</comment>
<comment type="tissue specificity">
    <text evidence="3">Tapetum of anthers.</text>
</comment>
<comment type="developmental stage">
    <text evidence="3">Found when sporogenous cells are in early meiosis. Disappears totally as the microspores go into interphase, when the tapetal cell layer degenerates.</text>
</comment>
<comment type="similarity">
    <text evidence="4">Belongs to the A9/FIL1 family.</text>
</comment>
<accession>Q05772</accession>
<proteinExistence type="evidence at transcript level"/>